<dbReference type="EC" id="4.2.1.44" evidence="1"/>
<dbReference type="EMBL" id="AE017332">
    <property type="protein sequence ID" value="AAV27740.1"/>
    <property type="molecule type" value="Genomic_DNA"/>
</dbReference>
<dbReference type="RefSeq" id="WP_011205986.1">
    <property type="nucleotide sequence ID" value="NC_006360.1"/>
</dbReference>
<dbReference type="SMR" id="Q601Q3"/>
<dbReference type="KEGG" id="mhy:mhp148"/>
<dbReference type="eggNOG" id="COG1082">
    <property type="taxonomic scope" value="Bacteria"/>
</dbReference>
<dbReference type="HOGENOM" id="CLU_059523_0_0_14"/>
<dbReference type="PhylomeDB" id="Q601Q3"/>
<dbReference type="Proteomes" id="UP000006822">
    <property type="component" value="Chromosome"/>
</dbReference>
<dbReference type="GO" id="GO:0030145">
    <property type="term" value="F:manganese ion binding"/>
    <property type="evidence" value="ECO:0007669"/>
    <property type="project" value="UniProtKB-UniRule"/>
</dbReference>
<dbReference type="GO" id="GO:0050114">
    <property type="term" value="F:myo-inosose-2 dehydratase activity"/>
    <property type="evidence" value="ECO:0007669"/>
    <property type="project" value="UniProtKB-UniRule"/>
</dbReference>
<dbReference type="GO" id="GO:0019310">
    <property type="term" value="P:inositol catabolic process"/>
    <property type="evidence" value="ECO:0007669"/>
    <property type="project" value="UniProtKB-UniRule"/>
</dbReference>
<dbReference type="Gene3D" id="3.20.20.150">
    <property type="entry name" value="Divalent-metal-dependent TIM barrel enzymes"/>
    <property type="match status" value="1"/>
</dbReference>
<dbReference type="HAMAP" id="MF_01672">
    <property type="entry name" value="IolE"/>
    <property type="match status" value="1"/>
</dbReference>
<dbReference type="InterPro" id="IPR023952">
    <property type="entry name" value="IolE"/>
</dbReference>
<dbReference type="InterPro" id="IPR030823">
    <property type="entry name" value="IolE/MocC"/>
</dbReference>
<dbReference type="InterPro" id="IPR050312">
    <property type="entry name" value="IolE/XylAMocC-like"/>
</dbReference>
<dbReference type="InterPro" id="IPR036237">
    <property type="entry name" value="Xyl_isomerase-like_sf"/>
</dbReference>
<dbReference type="InterPro" id="IPR013022">
    <property type="entry name" value="Xyl_isomerase-like_TIM-brl"/>
</dbReference>
<dbReference type="NCBIfam" id="TIGR04379">
    <property type="entry name" value="myo_inos_iolE"/>
    <property type="match status" value="1"/>
</dbReference>
<dbReference type="PANTHER" id="PTHR12110">
    <property type="entry name" value="HYDROXYPYRUVATE ISOMERASE"/>
    <property type="match status" value="1"/>
</dbReference>
<dbReference type="PANTHER" id="PTHR12110:SF41">
    <property type="entry name" value="INOSOSE DEHYDRATASE"/>
    <property type="match status" value="1"/>
</dbReference>
<dbReference type="Pfam" id="PF01261">
    <property type="entry name" value="AP_endonuc_2"/>
    <property type="match status" value="1"/>
</dbReference>
<dbReference type="SUPFAM" id="SSF51658">
    <property type="entry name" value="Xylose isomerase-like"/>
    <property type="match status" value="1"/>
</dbReference>
<protein>
    <recommendedName>
        <fullName evidence="1">Inosose dehydratase</fullName>
        <ecNumber evidence="1">4.2.1.44</ecNumber>
    </recommendedName>
    <alternativeName>
        <fullName evidence="1">2-keto-myo-inositol dehydratase</fullName>
        <shortName evidence="1">2KMI dehydratase</shortName>
    </alternativeName>
</protein>
<comment type="function">
    <text evidence="1">Catalyzes the dehydration of inosose (2-keto-myo-inositol, 2KMI or 2,4,6/3,5-pentahydroxycyclohexanone) to 3D-(3,5/4)-trihydroxycyclohexane-1,2-dione (D-2,3-diketo-4-deoxy-epi-inositol).</text>
</comment>
<comment type="catalytic activity">
    <reaction evidence="1">
        <text>scyllo-inosose = 3D-3,5/4-trihydroxycyclohexane-1,2-dione + H2O</text>
        <dbReference type="Rhea" id="RHEA:14065"/>
        <dbReference type="ChEBI" id="CHEBI:15377"/>
        <dbReference type="ChEBI" id="CHEBI:17811"/>
        <dbReference type="ChEBI" id="CHEBI:28446"/>
        <dbReference type="EC" id="4.2.1.44"/>
    </reaction>
</comment>
<comment type="cofactor">
    <cofactor evidence="1">
        <name>glutathione</name>
        <dbReference type="ChEBI" id="CHEBI:57925"/>
    </cofactor>
</comment>
<comment type="cofactor">
    <cofactor evidence="1">
        <name>Co(2+)</name>
        <dbReference type="ChEBI" id="CHEBI:48828"/>
    </cofactor>
    <cofactor evidence="1">
        <name>Mn(2+)</name>
        <dbReference type="ChEBI" id="CHEBI:29035"/>
    </cofactor>
</comment>
<comment type="similarity">
    <text evidence="1">Belongs to the IolE/MocC family.</text>
</comment>
<accession>Q601Q3</accession>
<evidence type="ECO:0000255" key="1">
    <source>
        <dbReference type="HAMAP-Rule" id="MF_01672"/>
    </source>
</evidence>
<gene>
    <name evidence="1" type="primary">iolE</name>
    <name type="ordered locus">mhp148</name>
</gene>
<keyword id="KW-0170">Cobalt</keyword>
<keyword id="KW-0456">Lyase</keyword>
<keyword id="KW-0464">Manganese</keyword>
<reference key="1">
    <citation type="journal article" date="2004" name="J. Bacteriol.">
        <title>The genome sequence of Mycoplasma hyopneumoniae strain 232, the agent of swine mycoplasmosis.</title>
        <authorList>
            <person name="Minion F.C."/>
            <person name="Lefkowitz E.J."/>
            <person name="Madsen M.L."/>
            <person name="Cleary B.J."/>
            <person name="Swartzell S.M."/>
            <person name="Mahairas G.G."/>
        </authorList>
    </citation>
    <scope>NUCLEOTIDE SEQUENCE [LARGE SCALE GENOMIC DNA]</scope>
    <source>
        <strain>232</strain>
    </source>
</reference>
<name>IOLE_MESH2</name>
<feature type="chain" id="PRO_0000352375" description="Inosose dehydratase">
    <location>
        <begin position="1"/>
        <end position="300"/>
    </location>
</feature>
<sequence>MNKIWKLKNVKVGVAPILWTNDDMPELGGDISFDRAISEMAQAGYQGTEIGNKFPKDAKILLRELKKYNLEIASAWFSGYIISDFEKNFQDFQKHCLFLKALGAKVVVFSEQTYSIQGQNKPLFKDKPYFTNQEFENLAQGLNKFGKWSKQHGIELVYHHHMGTGIQSLKETEKILELTDPEFVSLIFDTGHFAHAGEDIVFCLKRLISRIRHIHLKDIRKEKINELKAKNLSFLEGVKQGIFTVPGDGDIQNYPLFFELLAKNNYQGWLIVEAEQDPRKANPLEYAKKAMDYLRSLISW</sequence>
<proteinExistence type="inferred from homology"/>
<organism>
    <name type="scientific">Mesomycoplasma hyopneumoniae (strain 232)</name>
    <name type="common">Mycoplasma hyopneumoniae</name>
    <dbReference type="NCBI Taxonomy" id="295358"/>
    <lineage>
        <taxon>Bacteria</taxon>
        <taxon>Bacillati</taxon>
        <taxon>Mycoplasmatota</taxon>
        <taxon>Mycoplasmoidales</taxon>
        <taxon>Metamycoplasmataceae</taxon>
        <taxon>Mesomycoplasma</taxon>
    </lineage>
</organism>